<dbReference type="EC" id="2.7.1.170" evidence="1"/>
<dbReference type="EMBL" id="BA000045">
    <property type="protein sequence ID" value="BAC91687.1"/>
    <property type="molecule type" value="Genomic_DNA"/>
</dbReference>
<dbReference type="RefSeq" id="NP_926692.1">
    <property type="nucleotide sequence ID" value="NC_005125.1"/>
</dbReference>
<dbReference type="RefSeq" id="WP_011143735.1">
    <property type="nucleotide sequence ID" value="NC_005125.1"/>
</dbReference>
<dbReference type="SMR" id="Q7NEY1"/>
<dbReference type="STRING" id="251221.gene:10761262"/>
<dbReference type="EnsemblBacteria" id="BAC91687">
    <property type="protein sequence ID" value="BAC91687"/>
    <property type="gene ID" value="BAC91687"/>
</dbReference>
<dbReference type="KEGG" id="gvi:glr3746"/>
<dbReference type="PATRIC" id="fig|251221.4.peg.3780"/>
<dbReference type="eggNOG" id="COG2377">
    <property type="taxonomic scope" value="Bacteria"/>
</dbReference>
<dbReference type="HOGENOM" id="CLU_038782_1_0_3"/>
<dbReference type="InParanoid" id="Q7NEY1"/>
<dbReference type="OrthoDB" id="9763949at2"/>
<dbReference type="PhylomeDB" id="Q7NEY1"/>
<dbReference type="UniPathway" id="UPA00343"/>
<dbReference type="UniPathway" id="UPA00544"/>
<dbReference type="Proteomes" id="UP000000557">
    <property type="component" value="Chromosome"/>
</dbReference>
<dbReference type="GO" id="GO:0005524">
    <property type="term" value="F:ATP binding"/>
    <property type="evidence" value="ECO:0007669"/>
    <property type="project" value="UniProtKB-UniRule"/>
</dbReference>
<dbReference type="GO" id="GO:0016301">
    <property type="term" value="F:kinase activity"/>
    <property type="evidence" value="ECO:0000318"/>
    <property type="project" value="GO_Central"/>
</dbReference>
<dbReference type="GO" id="GO:0016773">
    <property type="term" value="F:phosphotransferase activity, alcohol group as acceptor"/>
    <property type="evidence" value="ECO:0007669"/>
    <property type="project" value="UniProtKB-UniRule"/>
</dbReference>
<dbReference type="GO" id="GO:0097175">
    <property type="term" value="P:1,6-anhydro-N-acetyl-beta-muramic acid catabolic process"/>
    <property type="evidence" value="ECO:0007669"/>
    <property type="project" value="UniProtKB-UniRule"/>
</dbReference>
<dbReference type="GO" id="GO:0006040">
    <property type="term" value="P:amino sugar metabolic process"/>
    <property type="evidence" value="ECO:0007669"/>
    <property type="project" value="InterPro"/>
</dbReference>
<dbReference type="GO" id="GO:0009254">
    <property type="term" value="P:peptidoglycan turnover"/>
    <property type="evidence" value="ECO:0007669"/>
    <property type="project" value="UniProtKB-UniRule"/>
</dbReference>
<dbReference type="CDD" id="cd24050">
    <property type="entry name" value="ASKHA_NBD_ANMK"/>
    <property type="match status" value="1"/>
</dbReference>
<dbReference type="Gene3D" id="3.30.420.40">
    <property type="match status" value="2"/>
</dbReference>
<dbReference type="HAMAP" id="MF_01270">
    <property type="entry name" value="AnhMurNAc_kinase"/>
    <property type="match status" value="1"/>
</dbReference>
<dbReference type="InterPro" id="IPR005338">
    <property type="entry name" value="Anhydro_N_Ac-Mur_kinase"/>
</dbReference>
<dbReference type="InterPro" id="IPR043129">
    <property type="entry name" value="ATPase_NBD"/>
</dbReference>
<dbReference type="NCBIfam" id="NF007148">
    <property type="entry name" value="PRK09585.3-2"/>
    <property type="match status" value="1"/>
</dbReference>
<dbReference type="PANTHER" id="PTHR30605">
    <property type="entry name" value="ANHYDRO-N-ACETYLMURAMIC ACID KINASE"/>
    <property type="match status" value="1"/>
</dbReference>
<dbReference type="PANTHER" id="PTHR30605:SF0">
    <property type="entry name" value="ANHYDRO-N-ACETYLMURAMIC ACID KINASE"/>
    <property type="match status" value="1"/>
</dbReference>
<dbReference type="Pfam" id="PF03702">
    <property type="entry name" value="AnmK"/>
    <property type="match status" value="1"/>
</dbReference>
<dbReference type="SUPFAM" id="SSF53067">
    <property type="entry name" value="Actin-like ATPase domain"/>
    <property type="match status" value="1"/>
</dbReference>
<gene>
    <name evidence="1" type="primary">anmK</name>
    <name type="ordered locus">glr3746</name>
</gene>
<name>ANMK_GLOVI</name>
<accession>Q7NEY1</accession>
<feature type="chain" id="PRO_0000250002" description="Anhydro-N-acetylmuramic acid kinase">
    <location>
        <begin position="1"/>
        <end position="379"/>
    </location>
</feature>
<feature type="binding site" evidence="1">
    <location>
        <begin position="12"/>
        <end position="19"/>
    </location>
    <ligand>
        <name>ATP</name>
        <dbReference type="ChEBI" id="CHEBI:30616"/>
    </ligand>
</feature>
<organism>
    <name type="scientific">Gloeobacter violaceus (strain ATCC 29082 / PCC 7421)</name>
    <dbReference type="NCBI Taxonomy" id="251221"/>
    <lineage>
        <taxon>Bacteria</taxon>
        <taxon>Bacillati</taxon>
        <taxon>Cyanobacteriota</taxon>
        <taxon>Cyanophyceae</taxon>
        <taxon>Gloeobacterales</taxon>
        <taxon>Gloeobacteraceae</taxon>
        <taxon>Gloeobacter</taxon>
    </lineage>
</organism>
<proteinExistence type="inferred from homology"/>
<protein>
    <recommendedName>
        <fullName evidence="1">Anhydro-N-acetylmuramic acid kinase</fullName>
        <ecNumber evidence="1">2.7.1.170</ecNumber>
    </recommendedName>
    <alternativeName>
        <fullName evidence="1">AnhMurNAc kinase</fullName>
    </alternativeName>
</protein>
<sequence length="379" mass="39927">MDPTLAVGLISGTSLDGMDGALVEIAGSAQQPAVTTLATLALPYPAGLRGRLLHLAEGKPVPVAEVSALHRDVALAFADCALQLIEQAGFRCGQIACIGSHGQTVHHQPPADNAAGHTLQLGDGAWIAERTGVTTVGNFRTRDMAAGGQGAPLVPILDYLLLRDARRDRCIQNLGGIANVTYLRAGGGPEEVIAFDTGPANLLIDGTVQIALGEPFDRGGSLALQGTVDRDCLERWLADPYFRRPPPKSTGREYFGYARARRLAEESAHLPVADRVATVSELTVRSIERAYRDFLPRLPDEVFLCGGGARNGYIRARLGRLLAPARVAVSDEAGIDPDFKEAMAFALLAWLRCTGAPGNLPAVTGAGRAVPLGDVHPAG</sequence>
<comment type="function">
    <text evidence="1">Catalyzes the specific phosphorylation of 1,6-anhydro-N-acetylmuramic acid (anhMurNAc) with the simultaneous cleavage of the 1,6-anhydro ring, generating MurNAc-6-P. Is required for the utilization of anhMurNAc either imported from the medium or derived from its own cell wall murein, and thus plays a role in cell wall recycling.</text>
</comment>
<comment type="catalytic activity">
    <reaction evidence="1">
        <text>1,6-anhydro-N-acetyl-beta-muramate + ATP + H2O = N-acetyl-D-muramate 6-phosphate + ADP + H(+)</text>
        <dbReference type="Rhea" id="RHEA:24952"/>
        <dbReference type="ChEBI" id="CHEBI:15377"/>
        <dbReference type="ChEBI" id="CHEBI:15378"/>
        <dbReference type="ChEBI" id="CHEBI:30616"/>
        <dbReference type="ChEBI" id="CHEBI:58690"/>
        <dbReference type="ChEBI" id="CHEBI:58722"/>
        <dbReference type="ChEBI" id="CHEBI:456216"/>
        <dbReference type="EC" id="2.7.1.170"/>
    </reaction>
</comment>
<comment type="pathway">
    <text evidence="1">Amino-sugar metabolism; 1,6-anhydro-N-acetylmuramate degradation.</text>
</comment>
<comment type="pathway">
    <text evidence="1">Cell wall biogenesis; peptidoglycan recycling.</text>
</comment>
<comment type="similarity">
    <text evidence="1">Belongs to the anhydro-N-acetylmuramic acid kinase family.</text>
</comment>
<evidence type="ECO:0000255" key="1">
    <source>
        <dbReference type="HAMAP-Rule" id="MF_01270"/>
    </source>
</evidence>
<reference key="1">
    <citation type="journal article" date="2003" name="DNA Res.">
        <title>Complete genome structure of Gloeobacter violaceus PCC 7421, a cyanobacterium that lacks thylakoids.</title>
        <authorList>
            <person name="Nakamura Y."/>
            <person name="Kaneko T."/>
            <person name="Sato S."/>
            <person name="Mimuro M."/>
            <person name="Miyashita H."/>
            <person name="Tsuchiya T."/>
            <person name="Sasamoto S."/>
            <person name="Watanabe A."/>
            <person name="Kawashima K."/>
            <person name="Kishida Y."/>
            <person name="Kiyokawa C."/>
            <person name="Kohara M."/>
            <person name="Matsumoto M."/>
            <person name="Matsuno A."/>
            <person name="Nakazaki N."/>
            <person name="Shimpo S."/>
            <person name="Takeuchi C."/>
            <person name="Yamada M."/>
            <person name="Tabata S."/>
        </authorList>
    </citation>
    <scope>NUCLEOTIDE SEQUENCE [LARGE SCALE GENOMIC DNA]</scope>
    <source>
        <strain>ATCC 29082 / PCC 7421</strain>
    </source>
</reference>
<keyword id="KW-0067">ATP-binding</keyword>
<keyword id="KW-0119">Carbohydrate metabolism</keyword>
<keyword id="KW-0418">Kinase</keyword>
<keyword id="KW-0547">Nucleotide-binding</keyword>
<keyword id="KW-1185">Reference proteome</keyword>
<keyword id="KW-0808">Transferase</keyword>